<sequence>MNINVLTLFPEMFTPLQVSLLGRGQEDGKWKLNLVNFRDFSDRPHKSVDDTPYGGGAGMVLQVKPIKDALDSLENKGKVIITAPQGKTFNEQMAQEWSKEENLTFICGHFEGFDQRVYDLADEMVSIGDYVLTGGELPTMSMIDATVRLLPGILGNALSTVEESFSDGLLEYPQYTRPADFEGQKVPEVLLSGNHGKIDEWRHYQALKATKLHRPDLLEKRDLTPEEVRMLRQIREDEQAEEDKL</sequence>
<protein>
    <recommendedName>
        <fullName evidence="1">tRNA (guanine-N(1)-)-methyltransferase</fullName>
        <ecNumber evidence="1">2.1.1.228</ecNumber>
    </recommendedName>
    <alternativeName>
        <fullName evidence="1">M1G-methyltransferase</fullName>
    </alternativeName>
    <alternativeName>
        <fullName evidence="1">tRNA [GM37] methyltransferase</fullName>
    </alternativeName>
</protein>
<accession>Q049R8</accession>
<name>TRMD_LACDB</name>
<organism>
    <name type="scientific">Lactobacillus delbrueckii subsp. bulgaricus (strain ATCC BAA-365 / Lb-18)</name>
    <dbReference type="NCBI Taxonomy" id="321956"/>
    <lineage>
        <taxon>Bacteria</taxon>
        <taxon>Bacillati</taxon>
        <taxon>Bacillota</taxon>
        <taxon>Bacilli</taxon>
        <taxon>Lactobacillales</taxon>
        <taxon>Lactobacillaceae</taxon>
        <taxon>Lactobacillus</taxon>
    </lineage>
</organism>
<feature type="chain" id="PRO_1000006490" description="tRNA (guanine-N(1)-)-methyltransferase">
    <location>
        <begin position="1"/>
        <end position="245"/>
    </location>
</feature>
<feature type="binding site" evidence="1">
    <location>
        <position position="108"/>
    </location>
    <ligand>
        <name>S-adenosyl-L-methionine</name>
        <dbReference type="ChEBI" id="CHEBI:59789"/>
    </ligand>
</feature>
<feature type="binding site" evidence="1">
    <location>
        <begin position="127"/>
        <end position="132"/>
    </location>
    <ligand>
        <name>S-adenosyl-L-methionine</name>
        <dbReference type="ChEBI" id="CHEBI:59789"/>
    </ligand>
</feature>
<comment type="function">
    <text evidence="1">Specifically methylates guanosine-37 in various tRNAs.</text>
</comment>
<comment type="catalytic activity">
    <reaction evidence="1">
        <text>guanosine(37) in tRNA + S-adenosyl-L-methionine = N(1)-methylguanosine(37) in tRNA + S-adenosyl-L-homocysteine + H(+)</text>
        <dbReference type="Rhea" id="RHEA:36899"/>
        <dbReference type="Rhea" id="RHEA-COMP:10145"/>
        <dbReference type="Rhea" id="RHEA-COMP:10147"/>
        <dbReference type="ChEBI" id="CHEBI:15378"/>
        <dbReference type="ChEBI" id="CHEBI:57856"/>
        <dbReference type="ChEBI" id="CHEBI:59789"/>
        <dbReference type="ChEBI" id="CHEBI:73542"/>
        <dbReference type="ChEBI" id="CHEBI:74269"/>
        <dbReference type="EC" id="2.1.1.228"/>
    </reaction>
</comment>
<comment type="subunit">
    <text evidence="1">Homodimer.</text>
</comment>
<comment type="subcellular location">
    <subcellularLocation>
        <location evidence="1">Cytoplasm</location>
    </subcellularLocation>
</comment>
<comment type="similarity">
    <text evidence="1">Belongs to the RNA methyltransferase TrmD family.</text>
</comment>
<evidence type="ECO:0000255" key="1">
    <source>
        <dbReference type="HAMAP-Rule" id="MF_00605"/>
    </source>
</evidence>
<reference key="1">
    <citation type="journal article" date="2006" name="Proc. Natl. Acad. Sci. U.S.A.">
        <title>Comparative genomics of the lactic acid bacteria.</title>
        <authorList>
            <person name="Makarova K.S."/>
            <person name="Slesarev A."/>
            <person name="Wolf Y.I."/>
            <person name="Sorokin A."/>
            <person name="Mirkin B."/>
            <person name="Koonin E.V."/>
            <person name="Pavlov A."/>
            <person name="Pavlova N."/>
            <person name="Karamychev V."/>
            <person name="Polouchine N."/>
            <person name="Shakhova V."/>
            <person name="Grigoriev I."/>
            <person name="Lou Y."/>
            <person name="Rohksar D."/>
            <person name="Lucas S."/>
            <person name="Huang K."/>
            <person name="Goodstein D.M."/>
            <person name="Hawkins T."/>
            <person name="Plengvidhya V."/>
            <person name="Welker D."/>
            <person name="Hughes J."/>
            <person name="Goh Y."/>
            <person name="Benson A."/>
            <person name="Baldwin K."/>
            <person name="Lee J.-H."/>
            <person name="Diaz-Muniz I."/>
            <person name="Dosti B."/>
            <person name="Smeianov V."/>
            <person name="Wechter W."/>
            <person name="Barabote R."/>
            <person name="Lorca G."/>
            <person name="Altermann E."/>
            <person name="Barrangou R."/>
            <person name="Ganesan B."/>
            <person name="Xie Y."/>
            <person name="Rawsthorne H."/>
            <person name="Tamir D."/>
            <person name="Parker C."/>
            <person name="Breidt F."/>
            <person name="Broadbent J.R."/>
            <person name="Hutkins R."/>
            <person name="O'Sullivan D."/>
            <person name="Steele J."/>
            <person name="Unlu G."/>
            <person name="Saier M.H. Jr."/>
            <person name="Klaenhammer T."/>
            <person name="Richardson P."/>
            <person name="Kozyavkin S."/>
            <person name="Weimer B.C."/>
            <person name="Mills D.A."/>
        </authorList>
    </citation>
    <scope>NUCLEOTIDE SEQUENCE [LARGE SCALE GENOMIC DNA]</scope>
    <source>
        <strain>ATCC BAA-365 / Lb-18</strain>
    </source>
</reference>
<proteinExistence type="inferred from homology"/>
<dbReference type="EC" id="2.1.1.228" evidence="1"/>
<dbReference type="EMBL" id="CP000412">
    <property type="protein sequence ID" value="ABJ58804.1"/>
    <property type="molecule type" value="Genomic_DNA"/>
</dbReference>
<dbReference type="RefSeq" id="WP_004560797.1">
    <property type="nucleotide sequence ID" value="NC_008529.1"/>
</dbReference>
<dbReference type="SMR" id="Q049R8"/>
<dbReference type="KEGG" id="lbu:LBUL_1279"/>
<dbReference type="HOGENOM" id="CLU_047363_0_1_9"/>
<dbReference type="BioCyc" id="LDEL321956:LBUL_RS06010-MONOMER"/>
<dbReference type="GO" id="GO:0005829">
    <property type="term" value="C:cytosol"/>
    <property type="evidence" value="ECO:0007669"/>
    <property type="project" value="TreeGrafter"/>
</dbReference>
<dbReference type="GO" id="GO:0052906">
    <property type="term" value="F:tRNA (guanine(37)-N1)-methyltransferase activity"/>
    <property type="evidence" value="ECO:0007669"/>
    <property type="project" value="UniProtKB-UniRule"/>
</dbReference>
<dbReference type="GO" id="GO:0002939">
    <property type="term" value="P:tRNA N1-guanine methylation"/>
    <property type="evidence" value="ECO:0007669"/>
    <property type="project" value="TreeGrafter"/>
</dbReference>
<dbReference type="CDD" id="cd18080">
    <property type="entry name" value="TrmD-like"/>
    <property type="match status" value="1"/>
</dbReference>
<dbReference type="FunFam" id="1.10.1270.20:FF:000001">
    <property type="entry name" value="tRNA (guanine-N(1)-)-methyltransferase"/>
    <property type="match status" value="1"/>
</dbReference>
<dbReference type="FunFam" id="3.40.1280.10:FF:000001">
    <property type="entry name" value="tRNA (guanine-N(1)-)-methyltransferase"/>
    <property type="match status" value="1"/>
</dbReference>
<dbReference type="Gene3D" id="3.40.1280.10">
    <property type="match status" value="1"/>
</dbReference>
<dbReference type="Gene3D" id="1.10.1270.20">
    <property type="entry name" value="tRNA(m1g37)methyltransferase, domain 2"/>
    <property type="match status" value="1"/>
</dbReference>
<dbReference type="HAMAP" id="MF_00605">
    <property type="entry name" value="TrmD"/>
    <property type="match status" value="1"/>
</dbReference>
<dbReference type="InterPro" id="IPR029028">
    <property type="entry name" value="Alpha/beta_knot_MTases"/>
</dbReference>
<dbReference type="InterPro" id="IPR023148">
    <property type="entry name" value="tRNA_m1G_MeTrfase_C_sf"/>
</dbReference>
<dbReference type="InterPro" id="IPR002649">
    <property type="entry name" value="tRNA_m1G_MeTrfase_TrmD"/>
</dbReference>
<dbReference type="InterPro" id="IPR029026">
    <property type="entry name" value="tRNA_m1G_MTases_N"/>
</dbReference>
<dbReference type="InterPro" id="IPR016009">
    <property type="entry name" value="tRNA_MeTrfase_TRMD/TRM10"/>
</dbReference>
<dbReference type="NCBIfam" id="NF000648">
    <property type="entry name" value="PRK00026.1"/>
    <property type="match status" value="1"/>
</dbReference>
<dbReference type="NCBIfam" id="TIGR00088">
    <property type="entry name" value="trmD"/>
    <property type="match status" value="1"/>
</dbReference>
<dbReference type="PANTHER" id="PTHR46417">
    <property type="entry name" value="TRNA (GUANINE-N(1)-)-METHYLTRANSFERASE"/>
    <property type="match status" value="1"/>
</dbReference>
<dbReference type="PANTHER" id="PTHR46417:SF1">
    <property type="entry name" value="TRNA (GUANINE-N(1)-)-METHYLTRANSFERASE"/>
    <property type="match status" value="1"/>
</dbReference>
<dbReference type="Pfam" id="PF01746">
    <property type="entry name" value="tRNA_m1G_MT"/>
    <property type="match status" value="1"/>
</dbReference>
<dbReference type="PIRSF" id="PIRSF000386">
    <property type="entry name" value="tRNA_mtase"/>
    <property type="match status" value="1"/>
</dbReference>
<dbReference type="SUPFAM" id="SSF75217">
    <property type="entry name" value="alpha/beta knot"/>
    <property type="match status" value="1"/>
</dbReference>
<keyword id="KW-0963">Cytoplasm</keyword>
<keyword id="KW-0489">Methyltransferase</keyword>
<keyword id="KW-0949">S-adenosyl-L-methionine</keyword>
<keyword id="KW-0808">Transferase</keyword>
<keyword id="KW-0819">tRNA processing</keyword>
<gene>
    <name evidence="1" type="primary">trmD</name>
    <name type="ordered locus">LBUL_1279</name>
</gene>